<reference key="1">
    <citation type="journal article" date="1993" name="J. Chem. Res.">
        <title>Peptides from Australian frogs. The structures of the caerins and caeridins from Litoria gilleni.</title>
        <authorList>
            <person name="Waugh R.J."/>
            <person name="Stone D.J.M."/>
            <person name="Bowie J.H."/>
            <person name="Wallace J.C."/>
            <person name="Tyler M.J."/>
        </authorList>
    </citation>
    <scope>PROTEIN SEQUENCE</scope>
    <scope>AMIDATION AT LYS-22</scope>
    <scope>MASS SPECTROMETRY</scope>
    <source>
        <tissue>Parotoid gland</tissue>
    </source>
</reference>
<sequence>GLWQKIKDKASELVSGIVEGVK</sequence>
<accession>P62563</accession>
<accession>P56238</accession>
<protein>
    <recommendedName>
        <fullName>Caerin-3.1</fullName>
    </recommendedName>
</protein>
<comment type="function">
    <text>Antibacterial peptide, that adopts an alpha helical conformation which can disrupt bacterial membranes. Each caerin displays a different antimicrobial specificity.</text>
</comment>
<comment type="subcellular location">
    <subcellularLocation>
        <location>Secreted</location>
    </subcellularLocation>
</comment>
<comment type="tissue specificity">
    <text>Expressed by the skin parotoid and/or rostral glands.</text>
</comment>
<comment type="mass spectrometry"/>
<comment type="similarity">
    <text evidence="2">Belongs to the frog skin active peptide (FSAP) family. Caerin subfamily.</text>
</comment>
<dbReference type="GO" id="GO:0005576">
    <property type="term" value="C:extracellular region"/>
    <property type="evidence" value="ECO:0007669"/>
    <property type="project" value="UniProtKB-SubCell"/>
</dbReference>
<dbReference type="GO" id="GO:0042742">
    <property type="term" value="P:defense response to bacterium"/>
    <property type="evidence" value="ECO:0007669"/>
    <property type="project" value="UniProtKB-KW"/>
</dbReference>
<name>CR31_RANGI</name>
<organism>
    <name type="scientific">Ranoidea gilleni</name>
    <name type="common">Centralian tree frog</name>
    <name type="synonym">Litoria gilleni</name>
    <dbReference type="NCBI Taxonomy" id="39405"/>
    <lineage>
        <taxon>Eukaryota</taxon>
        <taxon>Metazoa</taxon>
        <taxon>Chordata</taxon>
        <taxon>Craniata</taxon>
        <taxon>Vertebrata</taxon>
        <taxon>Euteleostomi</taxon>
        <taxon>Amphibia</taxon>
        <taxon>Batrachia</taxon>
        <taxon>Anura</taxon>
        <taxon>Neobatrachia</taxon>
        <taxon>Hyloidea</taxon>
        <taxon>Hylidae</taxon>
        <taxon>Pelodryadinae</taxon>
        <taxon>Ranoidea</taxon>
    </lineage>
</organism>
<feature type="peptide" id="PRO_0000043747" description="Caerin-3.1">
    <location>
        <begin position="1"/>
        <end position="22"/>
    </location>
</feature>
<feature type="modified residue" description="Lysine amide" evidence="1">
    <location>
        <position position="22"/>
    </location>
</feature>
<proteinExistence type="evidence at protein level"/>
<keyword id="KW-0027">Amidation</keyword>
<keyword id="KW-0878">Amphibian defense peptide</keyword>
<keyword id="KW-0044">Antibiotic</keyword>
<keyword id="KW-0929">Antimicrobial</keyword>
<keyword id="KW-0903">Direct protein sequencing</keyword>
<keyword id="KW-0964">Secreted</keyword>
<evidence type="ECO:0000269" key="1">
    <source ref="1"/>
</evidence>
<evidence type="ECO:0000305" key="2"/>